<dbReference type="EC" id="2.7.4.3" evidence="1"/>
<dbReference type="EMBL" id="CP000492">
    <property type="protein sequence ID" value="ABL65563.1"/>
    <property type="molecule type" value="Genomic_DNA"/>
</dbReference>
<dbReference type="RefSeq" id="WP_011745375.1">
    <property type="nucleotide sequence ID" value="NC_008639.1"/>
</dbReference>
<dbReference type="SMR" id="A1BGN6"/>
<dbReference type="STRING" id="290317.Cpha266_1541"/>
<dbReference type="KEGG" id="cph:Cpha266_1541"/>
<dbReference type="eggNOG" id="COG0563">
    <property type="taxonomic scope" value="Bacteria"/>
</dbReference>
<dbReference type="HOGENOM" id="CLU_032354_1_2_10"/>
<dbReference type="OrthoDB" id="9805030at2"/>
<dbReference type="UniPathway" id="UPA00588">
    <property type="reaction ID" value="UER00649"/>
</dbReference>
<dbReference type="Proteomes" id="UP000008701">
    <property type="component" value="Chromosome"/>
</dbReference>
<dbReference type="GO" id="GO:0005737">
    <property type="term" value="C:cytoplasm"/>
    <property type="evidence" value="ECO:0007669"/>
    <property type="project" value="UniProtKB-SubCell"/>
</dbReference>
<dbReference type="GO" id="GO:0004017">
    <property type="term" value="F:adenylate kinase activity"/>
    <property type="evidence" value="ECO:0007669"/>
    <property type="project" value="UniProtKB-UniRule"/>
</dbReference>
<dbReference type="GO" id="GO:0005524">
    <property type="term" value="F:ATP binding"/>
    <property type="evidence" value="ECO:0007669"/>
    <property type="project" value="UniProtKB-UniRule"/>
</dbReference>
<dbReference type="GO" id="GO:0044209">
    <property type="term" value="P:AMP salvage"/>
    <property type="evidence" value="ECO:0007669"/>
    <property type="project" value="UniProtKB-UniRule"/>
</dbReference>
<dbReference type="CDD" id="cd01428">
    <property type="entry name" value="ADK"/>
    <property type="match status" value="1"/>
</dbReference>
<dbReference type="FunFam" id="3.40.50.300:FF:000106">
    <property type="entry name" value="Adenylate kinase mitochondrial"/>
    <property type="match status" value="1"/>
</dbReference>
<dbReference type="Gene3D" id="3.40.50.300">
    <property type="entry name" value="P-loop containing nucleotide triphosphate hydrolases"/>
    <property type="match status" value="1"/>
</dbReference>
<dbReference type="HAMAP" id="MF_00235">
    <property type="entry name" value="Adenylate_kinase_Adk"/>
    <property type="match status" value="1"/>
</dbReference>
<dbReference type="InterPro" id="IPR006259">
    <property type="entry name" value="Adenyl_kin_sub"/>
</dbReference>
<dbReference type="InterPro" id="IPR000850">
    <property type="entry name" value="Adenylat/UMP-CMP_kin"/>
</dbReference>
<dbReference type="InterPro" id="IPR033690">
    <property type="entry name" value="Adenylat_kinase_CS"/>
</dbReference>
<dbReference type="InterPro" id="IPR007862">
    <property type="entry name" value="Adenylate_kinase_lid-dom"/>
</dbReference>
<dbReference type="InterPro" id="IPR027417">
    <property type="entry name" value="P-loop_NTPase"/>
</dbReference>
<dbReference type="NCBIfam" id="TIGR01351">
    <property type="entry name" value="adk"/>
    <property type="match status" value="1"/>
</dbReference>
<dbReference type="NCBIfam" id="NF001379">
    <property type="entry name" value="PRK00279.1-1"/>
    <property type="match status" value="1"/>
</dbReference>
<dbReference type="NCBIfam" id="NF001380">
    <property type="entry name" value="PRK00279.1-2"/>
    <property type="match status" value="1"/>
</dbReference>
<dbReference type="NCBIfam" id="NF001381">
    <property type="entry name" value="PRK00279.1-3"/>
    <property type="match status" value="1"/>
</dbReference>
<dbReference type="NCBIfam" id="NF011100">
    <property type="entry name" value="PRK14527.1"/>
    <property type="match status" value="1"/>
</dbReference>
<dbReference type="PANTHER" id="PTHR23359">
    <property type="entry name" value="NUCLEOTIDE KINASE"/>
    <property type="match status" value="1"/>
</dbReference>
<dbReference type="Pfam" id="PF00406">
    <property type="entry name" value="ADK"/>
    <property type="match status" value="1"/>
</dbReference>
<dbReference type="Pfam" id="PF05191">
    <property type="entry name" value="ADK_lid"/>
    <property type="match status" value="1"/>
</dbReference>
<dbReference type="PRINTS" id="PR00094">
    <property type="entry name" value="ADENYLTKNASE"/>
</dbReference>
<dbReference type="SUPFAM" id="SSF52540">
    <property type="entry name" value="P-loop containing nucleoside triphosphate hydrolases"/>
    <property type="match status" value="1"/>
</dbReference>
<dbReference type="PROSITE" id="PS00113">
    <property type="entry name" value="ADENYLATE_KINASE"/>
    <property type="match status" value="1"/>
</dbReference>
<proteinExistence type="inferred from homology"/>
<keyword id="KW-0067">ATP-binding</keyword>
<keyword id="KW-0963">Cytoplasm</keyword>
<keyword id="KW-0418">Kinase</keyword>
<keyword id="KW-0545">Nucleotide biosynthesis</keyword>
<keyword id="KW-0547">Nucleotide-binding</keyword>
<keyword id="KW-1185">Reference proteome</keyword>
<keyword id="KW-0808">Transferase</keyword>
<reference key="1">
    <citation type="submission" date="2006-12" db="EMBL/GenBank/DDBJ databases">
        <title>Complete sequence of Chlorobium phaeobacteroides DSM 266.</title>
        <authorList>
            <consortium name="US DOE Joint Genome Institute"/>
            <person name="Copeland A."/>
            <person name="Lucas S."/>
            <person name="Lapidus A."/>
            <person name="Barry K."/>
            <person name="Detter J.C."/>
            <person name="Glavina del Rio T."/>
            <person name="Hammon N."/>
            <person name="Israni S."/>
            <person name="Pitluck S."/>
            <person name="Goltsman E."/>
            <person name="Schmutz J."/>
            <person name="Larimer F."/>
            <person name="Land M."/>
            <person name="Hauser L."/>
            <person name="Mikhailova N."/>
            <person name="Li T."/>
            <person name="Overmann J."/>
            <person name="Bryant D.A."/>
            <person name="Richardson P."/>
        </authorList>
    </citation>
    <scope>NUCLEOTIDE SEQUENCE [LARGE SCALE GENOMIC DNA]</scope>
    <source>
        <strain>DSM 266 / SMG 266 / 2430</strain>
    </source>
</reference>
<sequence>MRIILLGAPGAGKGTQASYICKTLNIPQISTGDMLRAAVQAQTPVGIEAKKVMDAGKLVSDEIILALVKERLASQDCINGCLFDGFPRTIAQAESLKNDSILLDYVMEIHVDDKEIIERMSGRRVHLSSGRTYHVRFNPPKKEGLDDLTGEPLVQREDDQEETVKKRLQIYHDQTAPLLQYYHDWSLTGSPDAPRYSSIKGTGSVEEIRQRILDALNS</sequence>
<accession>A1BGN6</accession>
<organism>
    <name type="scientific">Chlorobium phaeobacteroides (strain DSM 266 / SMG 266 / 2430)</name>
    <dbReference type="NCBI Taxonomy" id="290317"/>
    <lineage>
        <taxon>Bacteria</taxon>
        <taxon>Pseudomonadati</taxon>
        <taxon>Chlorobiota</taxon>
        <taxon>Chlorobiia</taxon>
        <taxon>Chlorobiales</taxon>
        <taxon>Chlorobiaceae</taxon>
        <taxon>Chlorobium/Pelodictyon group</taxon>
        <taxon>Chlorobium</taxon>
    </lineage>
</organism>
<feature type="chain" id="PRO_1000058814" description="Adenylate kinase">
    <location>
        <begin position="1"/>
        <end position="218"/>
    </location>
</feature>
<feature type="region of interest" description="NMP" evidence="1">
    <location>
        <begin position="30"/>
        <end position="59"/>
    </location>
</feature>
<feature type="region of interest" description="LID" evidence="1">
    <location>
        <begin position="122"/>
        <end position="159"/>
    </location>
</feature>
<feature type="binding site" evidence="1">
    <location>
        <begin position="10"/>
        <end position="15"/>
    </location>
    <ligand>
        <name>ATP</name>
        <dbReference type="ChEBI" id="CHEBI:30616"/>
    </ligand>
</feature>
<feature type="binding site" evidence="1">
    <location>
        <position position="31"/>
    </location>
    <ligand>
        <name>AMP</name>
        <dbReference type="ChEBI" id="CHEBI:456215"/>
    </ligand>
</feature>
<feature type="binding site" evidence="1">
    <location>
        <position position="36"/>
    </location>
    <ligand>
        <name>AMP</name>
        <dbReference type="ChEBI" id="CHEBI:456215"/>
    </ligand>
</feature>
<feature type="binding site" evidence="1">
    <location>
        <begin position="57"/>
        <end position="59"/>
    </location>
    <ligand>
        <name>AMP</name>
        <dbReference type="ChEBI" id="CHEBI:456215"/>
    </ligand>
</feature>
<feature type="binding site" evidence="1">
    <location>
        <begin position="85"/>
        <end position="88"/>
    </location>
    <ligand>
        <name>AMP</name>
        <dbReference type="ChEBI" id="CHEBI:456215"/>
    </ligand>
</feature>
<feature type="binding site" evidence="1">
    <location>
        <position position="92"/>
    </location>
    <ligand>
        <name>AMP</name>
        <dbReference type="ChEBI" id="CHEBI:456215"/>
    </ligand>
</feature>
<feature type="binding site" evidence="1">
    <location>
        <position position="123"/>
    </location>
    <ligand>
        <name>ATP</name>
        <dbReference type="ChEBI" id="CHEBI:30616"/>
    </ligand>
</feature>
<feature type="binding site" evidence="1">
    <location>
        <begin position="132"/>
        <end position="133"/>
    </location>
    <ligand>
        <name>ATP</name>
        <dbReference type="ChEBI" id="CHEBI:30616"/>
    </ligand>
</feature>
<feature type="binding site" evidence="1">
    <location>
        <position position="156"/>
    </location>
    <ligand>
        <name>AMP</name>
        <dbReference type="ChEBI" id="CHEBI:456215"/>
    </ligand>
</feature>
<feature type="binding site" evidence="1">
    <location>
        <position position="167"/>
    </location>
    <ligand>
        <name>AMP</name>
        <dbReference type="ChEBI" id="CHEBI:456215"/>
    </ligand>
</feature>
<feature type="binding site" evidence="1">
    <location>
        <position position="203"/>
    </location>
    <ligand>
        <name>ATP</name>
        <dbReference type="ChEBI" id="CHEBI:30616"/>
    </ligand>
</feature>
<name>KAD_CHLPD</name>
<evidence type="ECO:0000255" key="1">
    <source>
        <dbReference type="HAMAP-Rule" id="MF_00235"/>
    </source>
</evidence>
<comment type="function">
    <text evidence="1">Catalyzes the reversible transfer of the terminal phosphate group between ATP and AMP. Plays an important role in cellular energy homeostasis and in adenine nucleotide metabolism.</text>
</comment>
<comment type="catalytic activity">
    <reaction evidence="1">
        <text>AMP + ATP = 2 ADP</text>
        <dbReference type="Rhea" id="RHEA:12973"/>
        <dbReference type="ChEBI" id="CHEBI:30616"/>
        <dbReference type="ChEBI" id="CHEBI:456215"/>
        <dbReference type="ChEBI" id="CHEBI:456216"/>
        <dbReference type="EC" id="2.7.4.3"/>
    </reaction>
</comment>
<comment type="pathway">
    <text evidence="1">Purine metabolism; AMP biosynthesis via salvage pathway; AMP from ADP: step 1/1.</text>
</comment>
<comment type="subunit">
    <text evidence="1">Monomer.</text>
</comment>
<comment type="subcellular location">
    <subcellularLocation>
        <location evidence="1">Cytoplasm</location>
    </subcellularLocation>
</comment>
<comment type="domain">
    <text evidence="1">Consists of three domains, a large central CORE domain and two small peripheral domains, NMPbind and LID, which undergo movements during catalysis. The LID domain closes over the site of phosphoryl transfer upon ATP binding. Assembling and dissambling the active center during each catalytic cycle provides an effective means to prevent ATP hydrolysis.</text>
</comment>
<comment type="similarity">
    <text evidence="1">Belongs to the adenylate kinase family.</text>
</comment>
<protein>
    <recommendedName>
        <fullName evidence="1">Adenylate kinase</fullName>
        <shortName evidence="1">AK</shortName>
        <ecNumber evidence="1">2.7.4.3</ecNumber>
    </recommendedName>
    <alternativeName>
        <fullName evidence="1">ATP-AMP transphosphorylase</fullName>
    </alternativeName>
    <alternativeName>
        <fullName evidence="1">ATP:AMP phosphotransferase</fullName>
    </alternativeName>
    <alternativeName>
        <fullName evidence="1">Adenylate monophosphate kinase</fullName>
    </alternativeName>
</protein>
<gene>
    <name evidence="1" type="primary">adk</name>
    <name type="ordered locus">Cpha266_1541</name>
</gene>